<accession>P20885</accession>
<sequence length="151" mass="17823">MAEGFAANRQWIGLEEAEELLDFDIATQMSEEGPLNPGVNPFRVPGITEKEKQNYCNILQPKLQDLRNEIQEVKLEEGNAGKRKRQRRRRKKKAFKRMMTELEDRFRKLFGTTSTTGDSTVDSEDEPPKKEKRVDWDEYWNPEEIERMLMD</sequence>
<name>REV_FIVPE</name>
<reference key="1">
    <citation type="journal article" date="1989" name="Proc. Natl. Acad. Sci. U.S.A.">
        <title>Nucleotide sequence and genomic organization of feline immunodeficiency virus.</title>
        <authorList>
            <person name="Talbott R.L."/>
            <person name="Sparger E.E."/>
            <person name="Lovelace K.M."/>
            <person name="Fitch W.M."/>
            <person name="Pedersen N.C."/>
            <person name="Luciw P.A."/>
            <person name="Elder J.H."/>
        </authorList>
    </citation>
    <scope>NUCLEOTIDE SEQUENCE [GENOMIC RNA]</scope>
    <source>
        <strain>Clone 34TF10</strain>
    </source>
</reference>
<reference key="2">
    <citation type="journal article" date="1989" name="Proc. Natl. Acad. Sci. U.S.A.">
        <title>Nucleotide sequence analysis of feline immunodeficiency virus: genome organization and relationship to other lentiviruses.</title>
        <authorList>
            <person name="Olmsted R.A."/>
            <person name="Hirsch V.M."/>
            <person name="Purcell R.H."/>
            <person name="Johnson P.R."/>
        </authorList>
    </citation>
    <scope>NUCLEOTIDE SEQUENCE [GENOMIC RNA]</scope>
    <source>
        <strain>Clone FIV-14</strain>
    </source>
</reference>
<organismHost>
    <name type="scientific">Felidae</name>
    <name type="common">cat family</name>
    <dbReference type="NCBI Taxonomy" id="9681"/>
</organismHost>
<protein>
    <recommendedName>
        <fullName>Probable protein Rev</fullName>
    </recommendedName>
    <alternativeName>
        <fullName>3'ORF</fullName>
    </alternativeName>
    <alternativeName>
        <fullName>ART/TRS</fullName>
    </alternativeName>
    <alternativeName>
        <fullName>Anti-repression transactivator</fullName>
    </alternativeName>
    <alternativeName>
        <fullName>ORF4</fullName>
    </alternativeName>
    <alternativeName>
        <fullName>ORFH</fullName>
    </alternativeName>
    <alternativeName>
        <fullName>Regulator of expression of viral proteins</fullName>
    </alternativeName>
</protein>
<dbReference type="EMBL" id="M25381">
    <property type="status" value="NOT_ANNOTATED_CDS"/>
    <property type="molecule type" value="Genomic_RNA"/>
</dbReference>
<dbReference type="PIR" id="E33543">
    <property type="entry name" value="ASLJF2"/>
</dbReference>
<dbReference type="SMR" id="P20885"/>
<dbReference type="Proteomes" id="UP000242267">
    <property type="component" value="Segment"/>
</dbReference>
<dbReference type="GO" id="GO:0030430">
    <property type="term" value="C:host cell cytoplasm"/>
    <property type="evidence" value="ECO:0007669"/>
    <property type="project" value="UniProtKB-SubCell"/>
</dbReference>
<dbReference type="GO" id="GO:0044196">
    <property type="term" value="C:host cell nucleolus"/>
    <property type="evidence" value="ECO:0007669"/>
    <property type="project" value="UniProtKB-SubCell"/>
</dbReference>
<dbReference type="GO" id="GO:0003723">
    <property type="term" value="F:RNA binding"/>
    <property type="evidence" value="ECO:0007669"/>
    <property type="project" value="UniProtKB-KW"/>
</dbReference>
<dbReference type="GO" id="GO:0051028">
    <property type="term" value="P:mRNA transport"/>
    <property type="evidence" value="ECO:0007669"/>
    <property type="project" value="UniProtKB-KW"/>
</dbReference>
<dbReference type="InterPro" id="IPR018582">
    <property type="entry name" value="Envelope_glycop_lentivirus"/>
</dbReference>
<dbReference type="Pfam" id="PF09590">
    <property type="entry name" value="Env-gp36"/>
    <property type="match status" value="1"/>
</dbReference>
<gene>
    <name type="primary">rev</name>
</gene>
<evidence type="ECO:0000250" key="1"/>
<evidence type="ECO:0000256" key="2">
    <source>
        <dbReference type="SAM" id="MobiDB-lite"/>
    </source>
</evidence>
<comment type="function">
    <text evidence="1">Escorts unspliced or incompletely spliced viral pre-mRNAs (late transcripts) out of the nucleus of infected cells. These pre-mRNAs carry a recognition sequence called Rev responsive element (RRE) located in the env gene, that is not present in fully spliced viral mRNAs (early transcripts). This function is essential since most viral proteins are translated from unspliced or partially spliced pre-mRNAs which cannot exit the nucleus by the pathway used by fully processed cellular mRNAs (By similarity).</text>
</comment>
<comment type="subunit">
    <text evidence="1">Homomultimer; when bound to the RRE. Multimeric assembly is essential for activity (By similarity).</text>
</comment>
<comment type="subcellular location">
    <subcellularLocation>
        <location>Host nucleus</location>
        <location>Host nucleolus</location>
    </subcellularLocation>
    <subcellularLocation>
        <location>Host cytoplasm</location>
    </subcellularLocation>
    <text evidence="1">The presence of both nuclear import and nuclear export signals leads to continuous shuttling between the nucleus and cytoplasm.</text>
</comment>
<comment type="domain">
    <text evidence="1">The RNA-binding motif binds to the RRE, a stem-and-loop structure present in incompletely spliced viral pre-mRNAs. This region also contains the NLS which mediates nuclear localization. These overlapping functions prevent Rev bound to RRE from undesirable return to the nucleus. When Rev binds the RRE, the NLS becomes masked while the NES remains accessible (By similarity).</text>
</comment>
<keyword id="KW-1035">Host cytoplasm</keyword>
<keyword id="KW-1048">Host nucleus</keyword>
<keyword id="KW-0509">mRNA transport</keyword>
<keyword id="KW-1185">Reference proteome</keyword>
<keyword id="KW-0694">RNA-binding</keyword>
<keyword id="KW-0813">Transport</keyword>
<feature type="chain" id="PRO_0000085515" description="Probable protein Rev">
    <location>
        <begin position="1"/>
        <end position="151"/>
    </location>
</feature>
<feature type="region of interest" description="Disordered" evidence="2">
    <location>
        <begin position="108"/>
        <end position="137"/>
    </location>
</feature>
<feature type="short sequence motif" description="Nuclear localization signal and RNA-binding (RRE)" evidence="1">
    <location>
        <begin position="84"/>
        <end position="93"/>
    </location>
</feature>
<feature type="compositionally biased region" description="Low complexity" evidence="2">
    <location>
        <begin position="111"/>
        <end position="120"/>
    </location>
</feature>
<feature type="compositionally biased region" description="Basic and acidic residues" evidence="2">
    <location>
        <begin position="126"/>
        <end position="136"/>
    </location>
</feature>
<proteinExistence type="inferred from homology"/>
<organism>
    <name type="scientific">Feline immunodeficiency virus (isolate Petaluma)</name>
    <name type="common">FIV</name>
    <dbReference type="NCBI Taxonomy" id="11674"/>
    <lineage>
        <taxon>Viruses</taxon>
        <taxon>Riboviria</taxon>
        <taxon>Pararnavirae</taxon>
        <taxon>Artverviricota</taxon>
        <taxon>Revtraviricetes</taxon>
        <taxon>Ortervirales</taxon>
        <taxon>Retroviridae</taxon>
        <taxon>Orthoretrovirinae</taxon>
        <taxon>Lentivirus</taxon>
        <taxon>Feline immunodeficiency virus</taxon>
    </lineage>
</organism>